<protein>
    <recommendedName>
        <fullName>Laminin subunit gamma-1</fullName>
    </recommendedName>
    <alternativeName>
        <fullName>Laminin B2 chain</fullName>
    </alternativeName>
    <alternativeName>
        <fullName>Laminin-1 subunit gamma</fullName>
    </alternativeName>
    <alternativeName>
        <fullName>Laminin-10 subunit gamma</fullName>
    </alternativeName>
    <alternativeName>
        <fullName>Laminin-11 subunit gamma</fullName>
    </alternativeName>
    <alternativeName>
        <fullName>Laminin-2 subunit gamma</fullName>
    </alternativeName>
    <alternativeName>
        <fullName>Laminin-3 subunit gamma</fullName>
    </alternativeName>
    <alternativeName>
        <fullName>Laminin-4 subunit gamma</fullName>
    </alternativeName>
    <alternativeName>
        <fullName>Laminin-6 subunit gamma</fullName>
    </alternativeName>
    <alternativeName>
        <fullName>Laminin-7 subunit gamma</fullName>
    </alternativeName>
    <alternativeName>
        <fullName>Laminin-8 subunit gamma</fullName>
    </alternativeName>
    <alternativeName>
        <fullName>Laminin-9 subunit gamma</fullName>
    </alternativeName>
    <alternativeName>
        <fullName>S-laminin subunit gamma</fullName>
        <shortName>S-LAM gamma</shortName>
    </alternativeName>
</protein>
<feature type="signal peptide">
    <location>
        <begin position="1"/>
        <end position="33"/>
    </location>
</feature>
<feature type="chain" id="PRO_0000017074" description="Laminin subunit gamma-1">
    <location>
        <begin position="34"/>
        <end position="1609"/>
    </location>
</feature>
<feature type="domain" description="Laminin N-terminal" evidence="5">
    <location>
        <begin position="46"/>
        <end position="285"/>
    </location>
</feature>
<feature type="domain" description="Laminin EGF-like 1" evidence="4">
    <location>
        <begin position="286"/>
        <end position="341"/>
    </location>
</feature>
<feature type="domain" description="Laminin EGF-like 2" evidence="4">
    <location>
        <begin position="342"/>
        <end position="397"/>
    </location>
</feature>
<feature type="domain" description="Laminin EGF-like 3" evidence="4">
    <location>
        <begin position="398"/>
        <end position="444"/>
    </location>
</feature>
<feature type="domain" description="Laminin EGF-like 4" evidence="4">
    <location>
        <begin position="445"/>
        <end position="494"/>
    </location>
</feature>
<feature type="domain" description="Laminin EGF-like 5; first part" evidence="4">
    <location>
        <begin position="495"/>
        <end position="504"/>
    </location>
</feature>
<feature type="domain" description="Laminin IV type A" evidence="3">
    <location>
        <begin position="514"/>
        <end position="689"/>
    </location>
</feature>
<feature type="domain" description="Laminin EGF-like 5; second part" evidence="4">
    <location>
        <begin position="690"/>
        <end position="723"/>
    </location>
</feature>
<feature type="domain" description="Laminin EGF-like 6" evidence="4">
    <location>
        <begin position="724"/>
        <end position="772"/>
    </location>
</feature>
<feature type="domain" description="Laminin EGF-like 7" evidence="4">
    <location>
        <begin position="773"/>
        <end position="827"/>
    </location>
</feature>
<feature type="domain" description="Laminin EGF-like 8" evidence="4">
    <location>
        <begin position="828"/>
        <end position="883"/>
    </location>
</feature>
<feature type="domain" description="Laminin EGF-like 9" evidence="4">
    <location>
        <begin position="884"/>
        <end position="934"/>
    </location>
</feature>
<feature type="domain" description="Laminin EGF-like 10" evidence="4">
    <location>
        <begin position="935"/>
        <end position="982"/>
    </location>
</feature>
<feature type="domain" description="Laminin EGF-like 11" evidence="4">
    <location>
        <begin position="983"/>
        <end position="1030"/>
    </location>
</feature>
<feature type="region of interest" description="Domain II and I">
    <location>
        <begin position="1030"/>
        <end position="1609"/>
    </location>
</feature>
<feature type="coiled-coil region" evidence="2">
    <location>
        <begin position="1038"/>
        <end position="1609"/>
    </location>
</feature>
<feature type="modified residue" description="Phosphoserine; by FAM20C" evidence="11">
    <location>
        <position position="1149"/>
    </location>
</feature>
<feature type="modified residue" description="Phosphoserine" evidence="17">
    <location>
        <position position="1493"/>
    </location>
</feature>
<feature type="glycosylation site" description="N-linked (GlcNAc...) asparagine" evidence="2">
    <location>
        <position position="60"/>
    </location>
</feature>
<feature type="glycosylation site" description="N-linked (GlcNAc...) asparagine" evidence="2">
    <location>
        <position position="134"/>
    </location>
</feature>
<feature type="glycosylation site" description="N-linked (GlcNAc...) asparagine" evidence="2">
    <location>
        <position position="576"/>
    </location>
</feature>
<feature type="glycosylation site" description="N-linked (GlcNAc...) asparagine" evidence="6 9">
    <location>
        <position position="650"/>
    </location>
</feature>
<feature type="glycosylation site" description="N-linked (GlcNAc...) asparagine" evidence="2">
    <location>
        <position position="1022"/>
    </location>
</feature>
<feature type="glycosylation site" description="N-linked (GlcNAc...) asparagine" evidence="7 9">
    <location>
        <position position="1107"/>
    </location>
</feature>
<feature type="glycosylation site" description="N-linked (GlcNAc...) asparagine" evidence="7">
    <location>
        <position position="1161"/>
    </location>
</feature>
<feature type="glycosylation site" description="N-linked (GlcNAc...) asparagine" evidence="7">
    <location>
        <position position="1175"/>
    </location>
</feature>
<feature type="glycosylation site" description="N-linked (GlcNAc...) asparagine" evidence="2">
    <location>
        <position position="1205"/>
    </location>
</feature>
<feature type="glycosylation site" description="N-linked (GlcNAc...) asparagine" evidence="7">
    <location>
        <position position="1223"/>
    </location>
</feature>
<feature type="glycosylation site" description="N-linked (GlcNAc...) asparagine" evidence="9">
    <location>
        <position position="1241"/>
    </location>
</feature>
<feature type="glycosylation site" description="N-linked (GlcNAc...) asparagine" evidence="2">
    <location>
        <position position="1380"/>
    </location>
</feature>
<feature type="glycosylation site" description="N-linked (GlcNAc...) asparagine" evidence="7 9">
    <location>
        <position position="1395"/>
    </location>
</feature>
<feature type="glycosylation site" description="N-linked (GlcNAc...) asparagine" evidence="2">
    <location>
        <position position="1439"/>
    </location>
</feature>
<feature type="disulfide bond" evidence="4">
    <location>
        <begin position="286"/>
        <end position="295"/>
    </location>
</feature>
<feature type="disulfide bond" evidence="4">
    <location>
        <begin position="288"/>
        <end position="305"/>
    </location>
</feature>
<feature type="disulfide bond" evidence="4">
    <location>
        <begin position="307"/>
        <end position="316"/>
    </location>
</feature>
<feature type="disulfide bond" evidence="4">
    <location>
        <begin position="319"/>
        <end position="339"/>
    </location>
</feature>
<feature type="disulfide bond" evidence="4">
    <location>
        <begin position="342"/>
        <end position="351"/>
    </location>
</feature>
<feature type="disulfide bond" evidence="4">
    <location>
        <begin position="344"/>
        <end position="367"/>
    </location>
</feature>
<feature type="disulfide bond" evidence="4">
    <location>
        <begin position="370"/>
        <end position="379"/>
    </location>
</feature>
<feature type="disulfide bond" evidence="4">
    <location>
        <begin position="382"/>
        <end position="395"/>
    </location>
</feature>
<feature type="disulfide bond" evidence="4">
    <location>
        <begin position="398"/>
        <end position="410"/>
    </location>
</feature>
<feature type="disulfide bond" evidence="4">
    <location>
        <begin position="400"/>
        <end position="416"/>
    </location>
</feature>
<feature type="disulfide bond" evidence="4">
    <location>
        <begin position="418"/>
        <end position="427"/>
    </location>
</feature>
<feature type="disulfide bond" evidence="4">
    <location>
        <begin position="430"/>
        <end position="442"/>
    </location>
</feature>
<feature type="disulfide bond" evidence="4">
    <location>
        <begin position="445"/>
        <end position="456"/>
    </location>
</feature>
<feature type="disulfide bond" evidence="4">
    <location>
        <begin position="447"/>
        <end position="463"/>
    </location>
</feature>
<feature type="disulfide bond" evidence="4">
    <location>
        <begin position="465"/>
        <end position="474"/>
    </location>
</feature>
<feature type="disulfide bond" evidence="4">
    <location>
        <begin position="477"/>
        <end position="492"/>
    </location>
</feature>
<feature type="disulfide bond" evidence="4">
    <location>
        <begin position="724"/>
        <end position="733"/>
    </location>
</feature>
<feature type="disulfide bond" evidence="4">
    <location>
        <begin position="726"/>
        <end position="740"/>
    </location>
</feature>
<feature type="disulfide bond" evidence="4">
    <location>
        <begin position="742"/>
        <end position="751"/>
    </location>
</feature>
<feature type="disulfide bond" evidence="4">
    <location>
        <begin position="754"/>
        <end position="770"/>
    </location>
</feature>
<feature type="disulfide bond" evidence="4">
    <location>
        <begin position="773"/>
        <end position="781"/>
    </location>
</feature>
<feature type="disulfide bond" evidence="4">
    <location>
        <begin position="775"/>
        <end position="792"/>
    </location>
</feature>
<feature type="disulfide bond" evidence="4">
    <location>
        <begin position="795"/>
        <end position="804"/>
    </location>
</feature>
<feature type="disulfide bond" evidence="4">
    <location>
        <begin position="807"/>
        <end position="825"/>
    </location>
</feature>
<feature type="disulfide bond" evidence="4">
    <location>
        <begin position="828"/>
        <end position="842"/>
    </location>
</feature>
<feature type="disulfide bond" evidence="4">
    <location>
        <begin position="830"/>
        <end position="849"/>
    </location>
</feature>
<feature type="disulfide bond" evidence="4">
    <location>
        <begin position="852"/>
        <end position="861"/>
    </location>
</feature>
<feature type="disulfide bond" evidence="4">
    <location>
        <begin position="864"/>
        <end position="881"/>
    </location>
</feature>
<feature type="disulfide bond" evidence="4">
    <location>
        <begin position="884"/>
        <end position="898"/>
    </location>
</feature>
<feature type="disulfide bond" evidence="4">
    <location>
        <begin position="886"/>
        <end position="905"/>
    </location>
</feature>
<feature type="disulfide bond" evidence="4">
    <location>
        <begin position="907"/>
        <end position="916"/>
    </location>
</feature>
<feature type="disulfide bond" evidence="4">
    <location>
        <begin position="919"/>
        <end position="932"/>
    </location>
</feature>
<feature type="disulfide bond" evidence="4">
    <location>
        <begin position="935"/>
        <end position="947"/>
    </location>
</feature>
<feature type="disulfide bond" evidence="4">
    <location>
        <begin position="937"/>
        <end position="954"/>
    </location>
</feature>
<feature type="disulfide bond" evidence="4">
    <location>
        <begin position="956"/>
        <end position="965"/>
    </location>
</feature>
<feature type="disulfide bond" evidence="4">
    <location>
        <begin position="968"/>
        <end position="980"/>
    </location>
</feature>
<feature type="disulfide bond" evidence="4">
    <location>
        <begin position="983"/>
        <end position="995"/>
    </location>
</feature>
<feature type="disulfide bond" evidence="4">
    <location>
        <begin position="985"/>
        <end position="1001"/>
    </location>
</feature>
<feature type="disulfide bond" evidence="4">
    <location>
        <begin position="1003"/>
        <end position="1012"/>
    </location>
</feature>
<feature type="disulfide bond" evidence="4">
    <location>
        <begin position="1015"/>
        <end position="1028"/>
    </location>
</feature>
<feature type="disulfide bond" description="Interchain" evidence="15">
    <location>
        <position position="1031"/>
    </location>
</feature>
<feature type="disulfide bond" description="Interchain" evidence="15">
    <location>
        <position position="1034"/>
    </location>
</feature>
<feature type="disulfide bond" description="Interchain" evidence="15">
    <location>
        <position position="1600"/>
    </location>
</feature>
<feature type="sequence variant" id="VAR_080757" description="Found in a consanguineous family with intellectual disability; uncertain significance; dbSNP:rs1189754362." evidence="12">
    <original>H</original>
    <variation>L</variation>
    <location>
        <position position="363"/>
    </location>
</feature>
<feature type="sequence variant" id="VAR_014700" description="In dbSNP:rs20563." evidence="10 13">
    <original>I</original>
    <variation>V</variation>
    <location>
        <position position="458"/>
    </location>
</feature>
<feature type="sequence variant" id="VAR_054488" description="In dbSNP:rs2230157.">
    <original>E</original>
    <variation>K</variation>
    <location>
        <position position="731"/>
    </location>
</feature>
<feature type="sequence variant" id="VAR_014701" description="In dbSNP:rs20558." evidence="10 13">
    <original>L</original>
    <variation>P</variation>
    <location>
        <position position="888"/>
    </location>
</feature>
<feature type="sequence variant" id="VAR_035821" description="In a colorectal cancer sample; somatic mutation; dbSNP:rs548688323." evidence="8">
    <original>R</original>
    <variation>H</variation>
    <location>
        <position position="1116"/>
    </location>
</feature>
<feature type="sequence variant" id="VAR_014702" description="In dbSNP:rs20559.">
    <original>R</original>
    <variation>Q</variation>
    <location>
        <position position="1121"/>
    </location>
</feature>
<feature type="sequence conflict" description="In Ref. 2; AAA59492." evidence="15" ref="2">
    <original>I</original>
    <variation>F</variation>
    <location>
        <position position="212"/>
    </location>
</feature>
<feature type="helix" evidence="18">
    <location>
        <begin position="1536"/>
        <end position="1552"/>
    </location>
</feature>
<feature type="helix" evidence="18">
    <location>
        <begin position="1554"/>
        <end position="1595"/>
    </location>
</feature>
<name>LAMC1_HUMAN</name>
<proteinExistence type="evidence at protein level"/>
<keyword id="KW-0002">3D-structure</keyword>
<keyword id="KW-0084">Basement membrane</keyword>
<keyword id="KW-0130">Cell adhesion</keyword>
<keyword id="KW-0175">Coiled coil</keyword>
<keyword id="KW-1015">Disulfide bond</keyword>
<keyword id="KW-0272">Extracellular matrix</keyword>
<keyword id="KW-0325">Glycoprotein</keyword>
<keyword id="KW-0424">Laminin EGF-like domain</keyword>
<keyword id="KW-0597">Phosphoprotein</keyword>
<keyword id="KW-1267">Proteomics identification</keyword>
<keyword id="KW-1185">Reference proteome</keyword>
<keyword id="KW-0677">Repeat</keyword>
<keyword id="KW-0964">Secreted</keyword>
<keyword id="KW-0732">Signal</keyword>
<gene>
    <name evidence="14 16" type="primary">LAMC1</name>
    <name type="synonym">LAMB2</name>
</gene>
<evidence type="ECO:0000250" key="1">
    <source>
        <dbReference type="UniProtKB" id="P02468"/>
    </source>
</evidence>
<evidence type="ECO:0000255" key="2"/>
<evidence type="ECO:0000255" key="3">
    <source>
        <dbReference type="PROSITE-ProRule" id="PRU00458"/>
    </source>
</evidence>
<evidence type="ECO:0000255" key="4">
    <source>
        <dbReference type="PROSITE-ProRule" id="PRU00460"/>
    </source>
</evidence>
<evidence type="ECO:0000255" key="5">
    <source>
        <dbReference type="PROSITE-ProRule" id="PRU00466"/>
    </source>
</evidence>
<evidence type="ECO:0000269" key="6">
    <source>
    </source>
</evidence>
<evidence type="ECO:0000269" key="7">
    <source>
    </source>
</evidence>
<evidence type="ECO:0000269" key="8">
    <source>
    </source>
</evidence>
<evidence type="ECO:0000269" key="9">
    <source>
    </source>
</evidence>
<evidence type="ECO:0000269" key="10">
    <source>
    </source>
</evidence>
<evidence type="ECO:0000269" key="11">
    <source>
    </source>
</evidence>
<evidence type="ECO:0000269" key="12">
    <source>
    </source>
</evidence>
<evidence type="ECO:0000269" key="13">
    <source>
    </source>
</evidence>
<evidence type="ECO:0000303" key="14">
    <source>
    </source>
</evidence>
<evidence type="ECO:0000305" key="15"/>
<evidence type="ECO:0000312" key="16">
    <source>
        <dbReference type="HGNC" id="HGNC:6492"/>
    </source>
</evidence>
<evidence type="ECO:0007744" key="17">
    <source>
    </source>
</evidence>
<evidence type="ECO:0007829" key="18">
    <source>
        <dbReference type="PDB" id="5XAU"/>
    </source>
</evidence>
<accession>P11047</accession>
<accession>Q5VYE7</accession>
<sequence length="1609" mass="177603">MRGSHRAAPALRPRGRLWPVLAVLAAAAAAGCAQAAMDECTDEGGRPQRCMPEFVNAAFNVTVVATNTCGTPPEEYCVQTGVTGVTKSCHLCDAGQPHLQHGAAFLTDYNNQADTTWWQSQTMLAGVQYPSSINLTLHLGKAFDITYVRLKFHTSRPESFAIYKRTREDGPWIPYQYYSGSCENTYSKANRGFIRTGGDEQQALCTDEFSDISPLTGGNVAFSTLEGRPSAYNFDNSPVLQEWVTATDIRVTLNRLNTFGDEVFNDPKVLKSYYYAISDFAVGGRCKCNGHASECMKNEFDKLVCNCKHNTYGVDCEKCLPFFNDRPWRRATAESASECLPCDCNGRSQECYFDPELYRSTGHGGHCTNCQDNTDGAHCERCRENFFRLGNNEACSSCHCSPVGSLSTQCDSYGRCSCKPGVMGDKCDRCQPGFHSLTEAGCRPCSCDPSGSIDECNIETGRCVCKDNVEGFNCERCKPGFFNLESSNPRGCTPCFCFGHSSVCTNAVGYSVYSISSTFQIDEDGWRAEQRDGSEASLEWSSERQDIAVISDSYFPRYFIAPAKFLGKQVLSYGQNLSFSFRVDRRDTRLSAEDLVLEGAGLRVSVPLIAQGNSYPSETTVKYVFRLHEATDYPWRPALTPFEFQKLLNNLTSIKIRGTYSERSAGYLDDVTLASARPGPGVPATWVESCTCPVGYGGQFCEMCLSGYRRETPNLGPYSPCVLCACNGHSETCDPETGVCNCRDNTAGPHCEKCSDGYYGDSTAGTSSDCQPCPCPGGSSCAVVPKTKEVVCTNCPTGTTGKRCELCDDGYFGDPLGRNGPVRLCRLCQCSDNIDPNAVGNCNRLTGECLKCIYNTAGFYCDRCKDGFFGNPLAPNPADKCKACNCNLYGTMKQQSSCNPVTGQCECLPHVTGQDCGACDPGFYNLQSGQGCERCDCHALGSTNGQCDIRTGQCECQPGITGQHCERCEVNHFGFGPEGCKPCDCHPEGSLSLQCKDDGRCECREGFVGNRCDQCEENYFYNRSWPGCQECPACYRLVKDKVADHRVKLQELESLIANLGTGDEMVTDQAFEDRLKEAEREVMDLLREAQDVKDVDQNLMDRLQRVNNTLSSQISRLQNIRNTIEETGNLAEQARAHVENTERLIEIASRELEKAKVAAANVSVTQPESTGDPNNMTLLAEEARKLAERHKQEADDIVRVAKTANDTSTEAYNLLLRTLAGENQTAFEIEELNRKYEQAKNISQDLEKQAARVHEEAKRAGDKAVEIYASVAQLSPLDSETLENEANNIKMEAENLEQLIDQKLKDYEDLREDMRGKELEVKNLLEKGKTEQQTADQLLARADAAKALAEEAAKKGRDTLQEANDILNNLKDFDRRVNDNKTAAEEALRKIPAINQTITEANEKTREAQQALGSAAADATEAKNKAHEAERIASAVQKNATSTKAEAERTFAEVTDLDNEVNNMLKQLQEAEKELKRKQDDADQDMMMAGMASQAAQEAEINARKAKNSVTSLLSIINDLLEQLGQLDTVDLNKLNEIEGTLNKAKDEMKVSDLDRKVSDLENEAKKQEAAIMDYNRDIEEIMKDIRNLEDIRKTLPSGCFNTPSIEKP</sequence>
<comment type="function">
    <text>Binding to cells via a high affinity receptor, laminin is thought to mediate the attachment, migration and organization of cells into tissues during embryonic development by interacting with other extracellular matrix components.</text>
</comment>
<comment type="subunit">
    <text evidence="1">Laminin is a complex glycoprotein, consisting of three different polypeptide chains (alpha, beta, gamma), which are bound to each other by disulfide bonds into a cross-shaped molecule comprising one long and three short arms with globules at each end. Gamma-1 is a subunit of laminin-1 (laminin-111 or EHS laminin), laminin-2 (laminin-211 or merosin), laminin-3 (laminin-121 or S-laminin), laminin-4 (laminin-221 or S-merosin), laminin-6 (laminin-311 or K-laminin), laminin-7 (laminin-321 or KS-laminin), laminin-8 (laminin-411), laminin-9 (laminin-421), laminin-10 (laminin-511) and laminin-11 (laminin-521). Interacts with SVEP1 (By similarity).</text>
</comment>
<comment type="subcellular location">
    <subcellularLocation>
        <location>Secreted</location>
        <location>Extracellular space</location>
        <location>Extracellular matrix</location>
        <location>Basement membrane</location>
    </subcellularLocation>
</comment>
<comment type="tissue specificity">
    <text>Found in the basement membranes (major component).</text>
</comment>
<comment type="domain">
    <text>The alpha-helical domains I and II are thought to interact with other laminin chains to form a coiled coil structure.</text>
</comment>
<comment type="domain">
    <text>Domains VI and IV are globular.</text>
</comment>
<reference key="1">
    <citation type="journal article" date="1988" name="J. Biol. Chem.">
        <title>Human laminin B2 chain. Comparison of the complete amino acid sequence with the B1 chain reveals variability in sequence homology between different structural domains.</title>
        <authorList>
            <person name="Pikkarainen T."/>
            <person name="Kallunki T."/>
            <person name="Tryggvason K."/>
        </authorList>
    </citation>
    <scope>NUCLEOTIDE SEQUENCE [MRNA]</scope>
    <scope>VARIANTS VAL-458 AND PRO-888</scope>
</reference>
<reference key="2">
    <citation type="journal article" date="1991" name="J. Biol. Chem.">
        <title>Structure of the human laminin B2 chain gene reveals extensive divergence from the laminin B1 chain gene.</title>
        <authorList>
            <person name="Kallunki T."/>
            <person name="Ikonen J."/>
            <person name="Chow L.T."/>
            <person name="Kallunki P."/>
            <person name="Tryggvason K."/>
        </authorList>
    </citation>
    <scope>NUCLEOTIDE SEQUENCE [GENOMIC DNA]</scope>
    <scope>VARIANTS VAL-458 AND PRO-888</scope>
</reference>
<reference key="3">
    <citation type="journal article" date="2006" name="Nature">
        <title>The DNA sequence and biological annotation of human chromosome 1.</title>
        <authorList>
            <person name="Gregory S.G."/>
            <person name="Barlow K.F."/>
            <person name="McLay K.E."/>
            <person name="Kaul R."/>
            <person name="Swarbreck D."/>
            <person name="Dunham A."/>
            <person name="Scott C.E."/>
            <person name="Howe K.L."/>
            <person name="Woodfine K."/>
            <person name="Spencer C.C.A."/>
            <person name="Jones M.C."/>
            <person name="Gillson C."/>
            <person name="Searle S."/>
            <person name="Zhou Y."/>
            <person name="Kokocinski F."/>
            <person name="McDonald L."/>
            <person name="Evans R."/>
            <person name="Phillips K."/>
            <person name="Atkinson A."/>
            <person name="Cooper R."/>
            <person name="Jones C."/>
            <person name="Hall R.E."/>
            <person name="Andrews T.D."/>
            <person name="Lloyd C."/>
            <person name="Ainscough R."/>
            <person name="Almeida J.P."/>
            <person name="Ambrose K.D."/>
            <person name="Anderson F."/>
            <person name="Andrew R.W."/>
            <person name="Ashwell R.I.S."/>
            <person name="Aubin K."/>
            <person name="Babbage A.K."/>
            <person name="Bagguley C.L."/>
            <person name="Bailey J."/>
            <person name="Beasley H."/>
            <person name="Bethel G."/>
            <person name="Bird C.P."/>
            <person name="Bray-Allen S."/>
            <person name="Brown J.Y."/>
            <person name="Brown A.J."/>
            <person name="Buckley D."/>
            <person name="Burton J."/>
            <person name="Bye J."/>
            <person name="Carder C."/>
            <person name="Chapman J.C."/>
            <person name="Clark S.Y."/>
            <person name="Clarke G."/>
            <person name="Clee C."/>
            <person name="Cobley V."/>
            <person name="Collier R.E."/>
            <person name="Corby N."/>
            <person name="Coville G.J."/>
            <person name="Davies J."/>
            <person name="Deadman R."/>
            <person name="Dunn M."/>
            <person name="Earthrowl M."/>
            <person name="Ellington A.G."/>
            <person name="Errington H."/>
            <person name="Frankish A."/>
            <person name="Frankland J."/>
            <person name="French L."/>
            <person name="Garner P."/>
            <person name="Garnett J."/>
            <person name="Gay L."/>
            <person name="Ghori M.R.J."/>
            <person name="Gibson R."/>
            <person name="Gilby L.M."/>
            <person name="Gillett W."/>
            <person name="Glithero R.J."/>
            <person name="Grafham D.V."/>
            <person name="Griffiths C."/>
            <person name="Griffiths-Jones S."/>
            <person name="Grocock R."/>
            <person name="Hammond S."/>
            <person name="Harrison E.S.I."/>
            <person name="Hart E."/>
            <person name="Haugen E."/>
            <person name="Heath P.D."/>
            <person name="Holmes S."/>
            <person name="Holt K."/>
            <person name="Howden P.J."/>
            <person name="Hunt A.R."/>
            <person name="Hunt S.E."/>
            <person name="Hunter G."/>
            <person name="Isherwood J."/>
            <person name="James R."/>
            <person name="Johnson C."/>
            <person name="Johnson D."/>
            <person name="Joy A."/>
            <person name="Kay M."/>
            <person name="Kershaw J.K."/>
            <person name="Kibukawa M."/>
            <person name="Kimberley A.M."/>
            <person name="King A."/>
            <person name="Knights A.J."/>
            <person name="Lad H."/>
            <person name="Laird G."/>
            <person name="Lawlor S."/>
            <person name="Leongamornlert D.A."/>
            <person name="Lloyd D.M."/>
            <person name="Loveland J."/>
            <person name="Lovell J."/>
            <person name="Lush M.J."/>
            <person name="Lyne R."/>
            <person name="Martin S."/>
            <person name="Mashreghi-Mohammadi M."/>
            <person name="Matthews L."/>
            <person name="Matthews N.S.W."/>
            <person name="McLaren S."/>
            <person name="Milne S."/>
            <person name="Mistry S."/>
            <person name="Moore M.J.F."/>
            <person name="Nickerson T."/>
            <person name="O'Dell C.N."/>
            <person name="Oliver K."/>
            <person name="Palmeiri A."/>
            <person name="Palmer S.A."/>
            <person name="Parker A."/>
            <person name="Patel D."/>
            <person name="Pearce A.V."/>
            <person name="Peck A.I."/>
            <person name="Pelan S."/>
            <person name="Phelps K."/>
            <person name="Phillimore B.J."/>
            <person name="Plumb R."/>
            <person name="Rajan J."/>
            <person name="Raymond C."/>
            <person name="Rouse G."/>
            <person name="Saenphimmachak C."/>
            <person name="Sehra H.K."/>
            <person name="Sheridan E."/>
            <person name="Shownkeen R."/>
            <person name="Sims S."/>
            <person name="Skuce C.D."/>
            <person name="Smith M."/>
            <person name="Steward C."/>
            <person name="Subramanian S."/>
            <person name="Sycamore N."/>
            <person name="Tracey A."/>
            <person name="Tromans A."/>
            <person name="Van Helmond Z."/>
            <person name="Wall M."/>
            <person name="Wallis J.M."/>
            <person name="White S."/>
            <person name="Whitehead S.L."/>
            <person name="Wilkinson J.E."/>
            <person name="Willey D.L."/>
            <person name="Williams H."/>
            <person name="Wilming L."/>
            <person name="Wray P.W."/>
            <person name="Wu Z."/>
            <person name="Coulson A."/>
            <person name="Vaudin M."/>
            <person name="Sulston J.E."/>
            <person name="Durbin R.M."/>
            <person name="Hubbard T."/>
            <person name="Wooster R."/>
            <person name="Dunham I."/>
            <person name="Carter N.P."/>
            <person name="McVean G."/>
            <person name="Ross M.T."/>
            <person name="Harrow J."/>
            <person name="Olson M.V."/>
            <person name="Beck S."/>
            <person name="Rogers J."/>
            <person name="Bentley D.R."/>
        </authorList>
    </citation>
    <scope>NUCLEOTIDE SEQUENCE [LARGE SCALE GENOMIC DNA]</scope>
</reference>
<reference key="4">
    <citation type="journal article" date="1991" name="DNA Seq.">
        <title>Differences in human laminin B2 sequences.</title>
        <authorList>
            <person name="Santos C.L.S."/>
            <person name="Sabbaga J."/>
            <person name="Brentani R."/>
        </authorList>
    </citation>
    <scope>NUCLEOTIDE SEQUENCE [MRNA] OF 1282-1609</scope>
    <source>
        <tissue>Endothelial cell</tissue>
    </source>
</reference>
<reference key="5">
    <citation type="journal article" date="1988" name="Cytogenet. Cell Genet.">
        <title>Isolation of a human laminin B2 (LAMB2) cDNA clone and assignment of the gene to chromosome region 1q25--&gt;q31.</title>
        <authorList>
            <person name="Fukushima Y."/>
            <person name="Pikkarainen T."/>
            <person name="Kallunki T."/>
            <person name="Eddy R.L."/>
            <person name="Byers M.G."/>
            <person name="Haley L.L."/>
            <person name="Henry W.M."/>
            <person name="Tryggvason K."/>
            <person name="Shows T.B."/>
        </authorList>
    </citation>
    <scope>NUCLEOTIDE SEQUENCE [MRNA] OF 1393-1609</scope>
</reference>
<reference key="6">
    <citation type="journal article" date="2003" name="Nat. Biotechnol.">
        <title>Identification and quantification of N-linked glycoproteins using hydrazide chemistry, stable isotope labeling and mass spectrometry.</title>
        <authorList>
            <person name="Zhang H."/>
            <person name="Li X.-J."/>
            <person name="Martin D.B."/>
            <person name="Aebersold R."/>
        </authorList>
    </citation>
    <scope>GLYCOSYLATION AT ASN-650</scope>
</reference>
<reference key="7">
    <citation type="journal article" date="2005" name="J. Proteome Res.">
        <title>Human plasma N-glycoproteome analysis by immunoaffinity subtraction, hydrazide chemistry, and mass spectrometry.</title>
        <authorList>
            <person name="Liu T."/>
            <person name="Qian W.-J."/>
            <person name="Gritsenko M.A."/>
            <person name="Camp D.G. II"/>
            <person name="Monroe M.E."/>
            <person name="Moore R.J."/>
            <person name="Smith R.D."/>
        </authorList>
    </citation>
    <scope>GLYCOSYLATION [LARGE SCALE ANALYSIS] AT ASN-1107; ASN-1161; ASN-1175; ASN-1223 AND ASN-1395</scope>
    <source>
        <tissue>Plasma</tissue>
    </source>
</reference>
<reference key="8">
    <citation type="journal article" date="2009" name="J. Proteome Res.">
        <title>Glycoproteomics analysis of human liver tissue by combination of multiple enzyme digestion and hydrazide chemistry.</title>
        <authorList>
            <person name="Chen R."/>
            <person name="Jiang X."/>
            <person name="Sun D."/>
            <person name="Han G."/>
            <person name="Wang F."/>
            <person name="Ye M."/>
            <person name="Wang L."/>
            <person name="Zou H."/>
        </authorList>
    </citation>
    <scope>GLYCOSYLATION [LARGE SCALE ANALYSIS] AT ASN-650; ASN-1107; ASN-1241 AND ASN-1395</scope>
    <source>
        <tissue>Liver</tissue>
    </source>
</reference>
<reference key="9">
    <citation type="journal article" date="2011" name="BMC Syst. Biol.">
        <title>Initial characterization of the human central proteome.</title>
        <authorList>
            <person name="Burkard T.R."/>
            <person name="Planyavsky M."/>
            <person name="Kaupe I."/>
            <person name="Breitwieser F.P."/>
            <person name="Buerckstuemmer T."/>
            <person name="Bennett K.L."/>
            <person name="Superti-Furga G."/>
            <person name="Colinge J."/>
        </authorList>
    </citation>
    <scope>IDENTIFICATION BY MASS SPECTROMETRY [LARGE SCALE ANALYSIS]</scope>
</reference>
<reference key="10">
    <citation type="journal article" date="2011" name="Sci. Signal.">
        <title>System-wide temporal characterization of the proteome and phosphoproteome of human embryonic stem cell differentiation.</title>
        <authorList>
            <person name="Rigbolt K.T."/>
            <person name="Prokhorova T.A."/>
            <person name="Akimov V."/>
            <person name="Henningsen J."/>
            <person name="Johansen P.T."/>
            <person name="Kratchmarova I."/>
            <person name="Kassem M."/>
            <person name="Mann M."/>
            <person name="Olsen J.V."/>
            <person name="Blagoev B."/>
        </authorList>
    </citation>
    <scope>PHOSPHORYLATION [LARGE SCALE ANALYSIS] AT SER-1493</scope>
    <scope>IDENTIFICATION BY MASS SPECTROMETRY [LARGE SCALE ANALYSIS]</scope>
</reference>
<reference key="11">
    <citation type="journal article" date="2012" name="J. Proteome Res.">
        <title>Resveratrol-induced changes of the human adipocyte secretion profile.</title>
        <authorList>
            <person name="Rosenow A."/>
            <person name="Noben J.P."/>
            <person name="Jocken J."/>
            <person name="Kallendrusch S."/>
            <person name="Fischer-Posovszky P."/>
            <person name="Mariman E.C."/>
            <person name="Renes J."/>
        </authorList>
    </citation>
    <scope>IDENTIFICATION BY MASS SPECTROMETRY [LARGE SCALE ANALYSIS]</scope>
</reference>
<reference key="12">
    <citation type="journal article" date="2014" name="J. Proteomics">
        <title>An enzyme assisted RP-RPLC approach for in-depth analysis of human liver phosphoproteome.</title>
        <authorList>
            <person name="Bian Y."/>
            <person name="Song C."/>
            <person name="Cheng K."/>
            <person name="Dong M."/>
            <person name="Wang F."/>
            <person name="Huang J."/>
            <person name="Sun D."/>
            <person name="Wang L."/>
            <person name="Ye M."/>
            <person name="Zou H."/>
        </authorList>
    </citation>
    <scope>IDENTIFICATION BY MASS SPECTROMETRY [LARGE SCALE ANALYSIS]</scope>
    <source>
        <tissue>Liver</tissue>
    </source>
</reference>
<reference key="13">
    <citation type="journal article" date="2015" name="Cell">
        <title>A single kinase generates the majority of the secreted phosphoproteome.</title>
        <authorList>
            <person name="Tagliabracci V.S."/>
            <person name="Wiley S.E."/>
            <person name="Guo X."/>
            <person name="Kinch L.N."/>
            <person name="Durrant E."/>
            <person name="Wen J."/>
            <person name="Xiao J."/>
            <person name="Cui J."/>
            <person name="Nguyen K.B."/>
            <person name="Engel J.L."/>
            <person name="Coon J.J."/>
            <person name="Grishin N."/>
            <person name="Pinna L.A."/>
            <person name="Pagliarini D.J."/>
            <person name="Dixon J.E."/>
        </authorList>
    </citation>
    <scope>PHOSPHORYLATION AT SER-1149</scope>
</reference>
<reference key="14">
    <citation type="journal article" date="2006" name="Science">
        <title>The consensus coding sequences of human breast and colorectal cancers.</title>
        <authorList>
            <person name="Sjoeblom T."/>
            <person name="Jones S."/>
            <person name="Wood L.D."/>
            <person name="Parsons D.W."/>
            <person name="Lin J."/>
            <person name="Barber T.D."/>
            <person name="Mandelker D."/>
            <person name="Leary R.J."/>
            <person name="Ptak J."/>
            <person name="Silliman N."/>
            <person name="Szabo S."/>
            <person name="Buckhaults P."/>
            <person name="Farrell C."/>
            <person name="Meeh P."/>
            <person name="Markowitz S.D."/>
            <person name="Willis J."/>
            <person name="Dawson D."/>
            <person name="Willson J.K.V."/>
            <person name="Gazdar A.F."/>
            <person name="Hartigan J."/>
            <person name="Wu L."/>
            <person name="Liu C."/>
            <person name="Parmigiani G."/>
            <person name="Park B.H."/>
            <person name="Bachman K.E."/>
            <person name="Papadopoulos N."/>
            <person name="Vogelstein B."/>
            <person name="Kinzler K.W."/>
            <person name="Velculescu V.E."/>
        </authorList>
    </citation>
    <scope>VARIANT [LARGE SCALE ANALYSIS] HIS-1116</scope>
</reference>
<reference key="15">
    <citation type="journal article" date="2018" name="Mol. Psychiatry">
        <title>Mapping autosomal recessive intellectual disability: combined microarray and exome sequencing identifies 26 novel candidate genes in 192 consanguineous families.</title>
        <authorList>
            <person name="Harripaul R."/>
            <person name="Vasli N."/>
            <person name="Mikhailov A."/>
            <person name="Rafiq M.A."/>
            <person name="Mittal K."/>
            <person name="Windpassinger C."/>
            <person name="Sheikh T.I."/>
            <person name="Noor A."/>
            <person name="Mahmood H."/>
            <person name="Downey S."/>
            <person name="Johnson M."/>
            <person name="Vleuten K."/>
            <person name="Bell L."/>
            <person name="Ilyas M."/>
            <person name="Khan F.S."/>
            <person name="Khan V."/>
            <person name="Moradi M."/>
            <person name="Ayaz M."/>
            <person name="Naeem F."/>
            <person name="Heidari A."/>
            <person name="Ahmed I."/>
            <person name="Ghadami S."/>
            <person name="Agha Z."/>
            <person name="Zeinali S."/>
            <person name="Qamar R."/>
            <person name="Mozhdehipanah H."/>
            <person name="John P."/>
            <person name="Mir A."/>
            <person name="Ansar M."/>
            <person name="French L."/>
            <person name="Ayub M."/>
            <person name="Vincent J.B."/>
        </authorList>
    </citation>
    <scope>VARIANT LEU-363</scope>
</reference>
<organism>
    <name type="scientific">Homo sapiens</name>
    <name type="common">Human</name>
    <dbReference type="NCBI Taxonomy" id="9606"/>
    <lineage>
        <taxon>Eukaryota</taxon>
        <taxon>Metazoa</taxon>
        <taxon>Chordata</taxon>
        <taxon>Craniata</taxon>
        <taxon>Vertebrata</taxon>
        <taxon>Euteleostomi</taxon>
        <taxon>Mammalia</taxon>
        <taxon>Eutheria</taxon>
        <taxon>Euarchontoglires</taxon>
        <taxon>Primates</taxon>
        <taxon>Haplorrhini</taxon>
        <taxon>Catarrhini</taxon>
        <taxon>Hominidae</taxon>
        <taxon>Homo</taxon>
    </lineage>
</organism>
<dbReference type="EMBL" id="J03202">
    <property type="protein sequence ID" value="AAA59488.1"/>
    <property type="molecule type" value="mRNA"/>
</dbReference>
<dbReference type="EMBL" id="M55210">
    <property type="protein sequence ID" value="AAA59492.1"/>
    <property type="molecule type" value="Genomic_DNA"/>
</dbReference>
<dbReference type="EMBL" id="M55217">
    <property type="protein sequence ID" value="AAA59492.1"/>
    <property type="status" value="JOINED"/>
    <property type="molecule type" value="Genomic_DNA"/>
</dbReference>
<dbReference type="EMBL" id="M55201">
    <property type="protein sequence ID" value="AAA59492.1"/>
    <property type="status" value="JOINED"/>
    <property type="molecule type" value="Genomic_DNA"/>
</dbReference>
<dbReference type="EMBL" id="M55211">
    <property type="protein sequence ID" value="AAA59492.1"/>
    <property type="status" value="JOINED"/>
    <property type="molecule type" value="Genomic_DNA"/>
</dbReference>
<dbReference type="EMBL" id="M55212">
    <property type="protein sequence ID" value="AAA59492.1"/>
    <property type="status" value="JOINED"/>
    <property type="molecule type" value="Genomic_DNA"/>
</dbReference>
<dbReference type="EMBL" id="M55213">
    <property type="protein sequence ID" value="AAA59492.1"/>
    <property type="status" value="JOINED"/>
    <property type="molecule type" value="Genomic_DNA"/>
</dbReference>
<dbReference type="EMBL" id="M55214">
    <property type="protein sequence ID" value="AAA59492.1"/>
    <property type="status" value="JOINED"/>
    <property type="molecule type" value="Genomic_DNA"/>
</dbReference>
<dbReference type="EMBL" id="M55215">
    <property type="protein sequence ID" value="AAA59492.1"/>
    <property type="status" value="JOINED"/>
    <property type="molecule type" value="Genomic_DNA"/>
</dbReference>
<dbReference type="EMBL" id="M55216">
    <property type="protein sequence ID" value="AAA59492.1"/>
    <property type="status" value="JOINED"/>
    <property type="molecule type" value="Genomic_DNA"/>
</dbReference>
<dbReference type="EMBL" id="M55192">
    <property type="protein sequence ID" value="AAA59492.1"/>
    <property type="status" value="JOINED"/>
    <property type="molecule type" value="Genomic_DNA"/>
</dbReference>
<dbReference type="EMBL" id="M55193">
    <property type="protein sequence ID" value="AAA59492.1"/>
    <property type="status" value="JOINED"/>
    <property type="molecule type" value="Genomic_DNA"/>
</dbReference>
<dbReference type="EMBL" id="M55194">
    <property type="protein sequence ID" value="AAA59492.1"/>
    <property type="status" value="JOINED"/>
    <property type="molecule type" value="Genomic_DNA"/>
</dbReference>
<dbReference type="EMBL" id="M55195">
    <property type="protein sequence ID" value="AAA59492.1"/>
    <property type="status" value="JOINED"/>
    <property type="molecule type" value="Genomic_DNA"/>
</dbReference>
<dbReference type="EMBL" id="M55196">
    <property type="protein sequence ID" value="AAA59492.1"/>
    <property type="status" value="JOINED"/>
    <property type="molecule type" value="Genomic_DNA"/>
</dbReference>
<dbReference type="EMBL" id="M55197">
    <property type="protein sequence ID" value="AAA59492.1"/>
    <property type="status" value="JOINED"/>
    <property type="molecule type" value="Genomic_DNA"/>
</dbReference>
<dbReference type="EMBL" id="M55198">
    <property type="protein sequence ID" value="AAA59492.1"/>
    <property type="status" value="JOINED"/>
    <property type="molecule type" value="Genomic_DNA"/>
</dbReference>
<dbReference type="EMBL" id="M55199">
    <property type="protein sequence ID" value="AAA59492.1"/>
    <property type="status" value="JOINED"/>
    <property type="molecule type" value="Genomic_DNA"/>
</dbReference>
<dbReference type="EMBL" id="M55200">
    <property type="protein sequence ID" value="AAA59492.1"/>
    <property type="status" value="JOINED"/>
    <property type="molecule type" value="Genomic_DNA"/>
</dbReference>
<dbReference type="EMBL" id="M55202">
    <property type="protein sequence ID" value="AAA59492.1"/>
    <property type="status" value="JOINED"/>
    <property type="molecule type" value="Genomic_DNA"/>
</dbReference>
<dbReference type="EMBL" id="M55203">
    <property type="protein sequence ID" value="AAA59492.1"/>
    <property type="status" value="JOINED"/>
    <property type="molecule type" value="Genomic_DNA"/>
</dbReference>
<dbReference type="EMBL" id="M55204">
    <property type="protein sequence ID" value="AAA59492.1"/>
    <property type="status" value="JOINED"/>
    <property type="molecule type" value="Genomic_DNA"/>
</dbReference>
<dbReference type="EMBL" id="M55205">
    <property type="protein sequence ID" value="AAA59492.1"/>
    <property type="status" value="JOINED"/>
    <property type="molecule type" value="Genomic_DNA"/>
</dbReference>
<dbReference type="EMBL" id="M55206">
    <property type="protein sequence ID" value="AAA59492.1"/>
    <property type="status" value="JOINED"/>
    <property type="molecule type" value="Genomic_DNA"/>
</dbReference>
<dbReference type="EMBL" id="M55207">
    <property type="protein sequence ID" value="AAA59492.1"/>
    <property type="status" value="JOINED"/>
    <property type="molecule type" value="Genomic_DNA"/>
</dbReference>
<dbReference type="EMBL" id="M55208">
    <property type="protein sequence ID" value="AAA59492.1"/>
    <property type="status" value="JOINED"/>
    <property type="molecule type" value="Genomic_DNA"/>
</dbReference>
<dbReference type="EMBL" id="M55209">
    <property type="protein sequence ID" value="AAA59492.1"/>
    <property type="status" value="JOINED"/>
    <property type="molecule type" value="Genomic_DNA"/>
</dbReference>
<dbReference type="EMBL" id="AL354953">
    <property type="status" value="NOT_ANNOTATED_CDS"/>
    <property type="molecule type" value="Genomic_DNA"/>
</dbReference>
<dbReference type="EMBL" id="AL450304">
    <property type="status" value="NOT_ANNOTATED_CDS"/>
    <property type="molecule type" value="Genomic_DNA"/>
</dbReference>
<dbReference type="EMBL" id="X13939">
    <property type="protein sequence ID" value="CAA32122.1"/>
    <property type="molecule type" value="mRNA"/>
</dbReference>
<dbReference type="EMBL" id="M27654">
    <property type="protein sequence ID" value="AAA59489.1"/>
    <property type="molecule type" value="mRNA"/>
</dbReference>
<dbReference type="CCDS" id="CCDS1351.1"/>
<dbReference type="PIR" id="S13548">
    <property type="entry name" value="MMHUB2"/>
</dbReference>
<dbReference type="RefSeq" id="NP_002284.3">
    <property type="nucleotide sequence ID" value="NM_002293.3"/>
</dbReference>
<dbReference type="PDB" id="5XAU">
    <property type="method" value="X-ray"/>
    <property type="resolution" value="1.80 A"/>
    <property type="chains" value="C/F=1528-1609"/>
</dbReference>
<dbReference type="PDB" id="7CEC">
    <property type="method" value="EM"/>
    <property type="resolution" value="3.90 A"/>
    <property type="chains" value="E=1528-1609"/>
</dbReference>
<dbReference type="PDB" id="8DMK">
    <property type="method" value="EM"/>
    <property type="resolution" value="3.70 A"/>
    <property type="chains" value="G=37-341"/>
</dbReference>
<dbReference type="PDBsum" id="5XAU"/>
<dbReference type="PDBsum" id="7CEC"/>
<dbReference type="PDBsum" id="8DMK"/>
<dbReference type="EMDB" id="EMD-27542"/>
<dbReference type="EMDB" id="EMD-30342"/>
<dbReference type="SMR" id="P11047"/>
<dbReference type="BioGRID" id="110109">
    <property type="interactions" value="164"/>
</dbReference>
<dbReference type="ComplexPortal" id="CPX-1770">
    <property type="entry name" value="Laminin-111 complex"/>
</dbReference>
<dbReference type="ComplexPortal" id="CPX-1771">
    <property type="entry name" value="Laminin-211 complex"/>
</dbReference>
<dbReference type="ComplexPortal" id="CPX-1772">
    <property type="entry name" value="Laminin-121 complex"/>
</dbReference>
<dbReference type="ComplexPortal" id="CPX-1773">
    <property type="entry name" value="Laminin-221 complex"/>
</dbReference>
<dbReference type="ComplexPortal" id="CPX-1775">
    <property type="entry name" value="Laminin-311 complex variant A"/>
</dbReference>
<dbReference type="ComplexPortal" id="CPX-1776">
    <property type="entry name" value="Laminin-321 complex"/>
</dbReference>
<dbReference type="ComplexPortal" id="CPX-1777">
    <property type="entry name" value="Laminin-411 complex"/>
</dbReference>
<dbReference type="ComplexPortal" id="CPX-1778">
    <property type="entry name" value="Laminin-421 complex"/>
</dbReference>
<dbReference type="ComplexPortal" id="CPX-1779">
    <property type="entry name" value="Laminin-511 complex"/>
</dbReference>
<dbReference type="ComplexPortal" id="CPX-1780">
    <property type="entry name" value="Laminin-521 complex"/>
</dbReference>
<dbReference type="ComplexPortal" id="CPX-3166">
    <property type="entry name" value="Laminin-311 complex variant B"/>
</dbReference>
<dbReference type="CORUM" id="P11047"/>
<dbReference type="FunCoup" id="P11047">
    <property type="interactions" value="933"/>
</dbReference>
<dbReference type="IntAct" id="P11047">
    <property type="interactions" value="65"/>
</dbReference>
<dbReference type="MINT" id="P11047"/>
<dbReference type="STRING" id="9606.ENSP00000258341"/>
<dbReference type="ChEMBL" id="CHEMBL2364187"/>
<dbReference type="DrugBank" id="DB06245">
    <property type="generic name" value="Lanoteplase"/>
</dbReference>
<dbReference type="CarbonylDB" id="P11047"/>
<dbReference type="GlyConnect" id="1444">
    <property type="glycosylation" value="60 N-Linked glycans (9 sites)"/>
</dbReference>
<dbReference type="GlyCosmos" id="P11047">
    <property type="glycosylation" value="19 sites, 67 glycans"/>
</dbReference>
<dbReference type="GlyGen" id="P11047">
    <property type="glycosylation" value="24 sites, 196 N-linked glycans (12 sites), 5 O-linked glycans (10 sites)"/>
</dbReference>
<dbReference type="iPTMnet" id="P11047"/>
<dbReference type="PhosphoSitePlus" id="P11047"/>
<dbReference type="SwissPalm" id="P11047"/>
<dbReference type="BioMuta" id="LAMC1"/>
<dbReference type="DMDM" id="224471885"/>
<dbReference type="jPOST" id="P11047"/>
<dbReference type="MassIVE" id="P11047"/>
<dbReference type="PaxDb" id="9606-ENSP00000258341"/>
<dbReference type="PeptideAtlas" id="P11047"/>
<dbReference type="ProteomicsDB" id="52689"/>
<dbReference type="Pumba" id="P11047"/>
<dbReference type="Antibodypedia" id="1055">
    <property type="antibodies" value="553 antibodies from 36 providers"/>
</dbReference>
<dbReference type="DNASU" id="3915"/>
<dbReference type="Ensembl" id="ENST00000258341.5">
    <property type="protein sequence ID" value="ENSP00000258341.3"/>
    <property type="gene ID" value="ENSG00000135862.6"/>
</dbReference>
<dbReference type="GeneID" id="3915"/>
<dbReference type="KEGG" id="hsa:3915"/>
<dbReference type="MANE-Select" id="ENST00000258341.5">
    <property type="protein sequence ID" value="ENSP00000258341.3"/>
    <property type="RefSeq nucleotide sequence ID" value="NM_002293.4"/>
    <property type="RefSeq protein sequence ID" value="NP_002284.3"/>
</dbReference>
<dbReference type="UCSC" id="uc001gpy.4">
    <property type="organism name" value="human"/>
</dbReference>
<dbReference type="AGR" id="HGNC:6492"/>
<dbReference type="CTD" id="3915"/>
<dbReference type="DisGeNET" id="3915"/>
<dbReference type="GeneCards" id="LAMC1"/>
<dbReference type="HGNC" id="HGNC:6492">
    <property type="gene designation" value="LAMC1"/>
</dbReference>
<dbReference type="HPA" id="ENSG00000135862">
    <property type="expression patterns" value="Tissue enhanced (placenta)"/>
</dbReference>
<dbReference type="MalaCards" id="LAMC1"/>
<dbReference type="MIM" id="150290">
    <property type="type" value="gene"/>
</dbReference>
<dbReference type="neXtProt" id="NX_P11047"/>
<dbReference type="OpenTargets" id="ENSG00000135862"/>
<dbReference type="PharmGKB" id="PA30280"/>
<dbReference type="VEuPathDB" id="HostDB:ENSG00000135862"/>
<dbReference type="eggNOG" id="KOG1836">
    <property type="taxonomic scope" value="Eukaryota"/>
</dbReference>
<dbReference type="GeneTree" id="ENSGT00940000158069"/>
<dbReference type="HOGENOM" id="CLU_002471_1_0_1"/>
<dbReference type="InParanoid" id="P11047"/>
<dbReference type="OMA" id="QGCTACF"/>
<dbReference type="OrthoDB" id="430826at2759"/>
<dbReference type="PAN-GO" id="P11047">
    <property type="GO annotations" value="6 GO annotations based on evolutionary models"/>
</dbReference>
<dbReference type="PhylomeDB" id="P11047"/>
<dbReference type="TreeFam" id="TF352481"/>
<dbReference type="PathwayCommons" id="P11047"/>
<dbReference type="Reactome" id="R-HSA-1474228">
    <property type="pathway name" value="Degradation of the extracellular matrix"/>
</dbReference>
<dbReference type="Reactome" id="R-HSA-3000157">
    <property type="pathway name" value="Laminin interactions"/>
</dbReference>
<dbReference type="Reactome" id="R-HSA-3000171">
    <property type="pathway name" value="Non-integrin membrane-ECM interactions"/>
</dbReference>
<dbReference type="Reactome" id="R-HSA-3000178">
    <property type="pathway name" value="ECM proteoglycans"/>
</dbReference>
<dbReference type="Reactome" id="R-HSA-373760">
    <property type="pathway name" value="L1CAM interactions"/>
</dbReference>
<dbReference type="Reactome" id="R-HSA-381426">
    <property type="pathway name" value="Regulation of Insulin-like Growth Factor (IGF) transport and uptake by Insulin-like Growth Factor Binding Proteins (IGFBPs)"/>
</dbReference>
<dbReference type="Reactome" id="R-HSA-8874081">
    <property type="pathway name" value="MET activates PTK2 signaling"/>
</dbReference>
<dbReference type="Reactome" id="R-HSA-8957275">
    <property type="pathway name" value="Post-translational protein phosphorylation"/>
</dbReference>
<dbReference type="Reactome" id="R-HSA-9619665">
    <property type="pathway name" value="EGR2 and SOX10-mediated initiation of Schwann cell myelination"/>
</dbReference>
<dbReference type="Reactome" id="R-HSA-9913351">
    <property type="pathway name" value="Formation of the dystrophin-glycoprotein complex (DGC)"/>
</dbReference>
<dbReference type="SignaLink" id="P11047"/>
<dbReference type="SIGNOR" id="P11047"/>
<dbReference type="BioGRID-ORCS" id="3915">
    <property type="hits" value="11 hits in 1153 CRISPR screens"/>
</dbReference>
<dbReference type="ChiTaRS" id="LAMC1">
    <property type="organism name" value="human"/>
</dbReference>
<dbReference type="GeneWiki" id="Laminin,_gamma_1"/>
<dbReference type="GenomeRNAi" id="3915"/>
<dbReference type="Pharos" id="P11047">
    <property type="development level" value="Tbio"/>
</dbReference>
<dbReference type="PRO" id="PR:P11047"/>
<dbReference type="Proteomes" id="UP000005640">
    <property type="component" value="Chromosome 1"/>
</dbReference>
<dbReference type="RNAct" id="P11047">
    <property type="molecule type" value="protein"/>
</dbReference>
<dbReference type="Bgee" id="ENSG00000135862">
    <property type="expression patterns" value="Expressed in stromal cell of endometrium and 209 other cell types or tissues"/>
</dbReference>
<dbReference type="ExpressionAtlas" id="P11047">
    <property type="expression patterns" value="baseline and differential"/>
</dbReference>
<dbReference type="GO" id="GO:0005604">
    <property type="term" value="C:basement membrane"/>
    <property type="evidence" value="ECO:0000314"/>
    <property type="project" value="UniProtKB"/>
</dbReference>
<dbReference type="GO" id="GO:0062023">
    <property type="term" value="C:collagen-containing extracellular matrix"/>
    <property type="evidence" value="ECO:0007005"/>
    <property type="project" value="UniProtKB"/>
</dbReference>
<dbReference type="GO" id="GO:0005788">
    <property type="term" value="C:endoplasmic reticulum lumen"/>
    <property type="evidence" value="ECO:0000304"/>
    <property type="project" value="Reactome"/>
</dbReference>
<dbReference type="GO" id="GO:0070062">
    <property type="term" value="C:extracellular exosome"/>
    <property type="evidence" value="ECO:0007005"/>
    <property type="project" value="UniProtKB"/>
</dbReference>
<dbReference type="GO" id="GO:0005576">
    <property type="term" value="C:extracellular region"/>
    <property type="evidence" value="ECO:0000304"/>
    <property type="project" value="Reactome"/>
</dbReference>
<dbReference type="GO" id="GO:0005615">
    <property type="term" value="C:extracellular space"/>
    <property type="evidence" value="ECO:0000303"/>
    <property type="project" value="UniProtKB"/>
</dbReference>
<dbReference type="GO" id="GO:0005606">
    <property type="term" value="C:laminin-1 complex"/>
    <property type="evidence" value="ECO:0000304"/>
    <property type="project" value="HGNC-UCL"/>
</dbReference>
<dbReference type="GO" id="GO:0043259">
    <property type="term" value="C:laminin-10 complex"/>
    <property type="evidence" value="ECO:0000304"/>
    <property type="project" value="BHF-UCL"/>
</dbReference>
<dbReference type="GO" id="GO:0043260">
    <property type="term" value="C:laminin-11 complex"/>
    <property type="evidence" value="ECO:0000304"/>
    <property type="project" value="BHF-UCL"/>
</dbReference>
<dbReference type="GO" id="GO:0098637">
    <property type="term" value="C:protein complex involved in cell-matrix adhesion"/>
    <property type="evidence" value="ECO:0000303"/>
    <property type="project" value="ComplexPortal"/>
</dbReference>
<dbReference type="GO" id="GO:0005201">
    <property type="term" value="F:extracellular matrix structural constituent"/>
    <property type="evidence" value="ECO:0000315"/>
    <property type="project" value="HGNC-UCL"/>
</dbReference>
<dbReference type="GO" id="GO:0007155">
    <property type="term" value="P:cell adhesion"/>
    <property type="evidence" value="ECO:0000314"/>
    <property type="project" value="HGNC-UCL"/>
</dbReference>
<dbReference type="GO" id="GO:0016477">
    <property type="term" value="P:cell migration"/>
    <property type="evidence" value="ECO:0000315"/>
    <property type="project" value="HGNC-UCL"/>
</dbReference>
<dbReference type="GO" id="GO:0007492">
    <property type="term" value="P:endoderm development"/>
    <property type="evidence" value="ECO:0000304"/>
    <property type="project" value="ProtInc"/>
</dbReference>
<dbReference type="GO" id="GO:0022617">
    <property type="term" value="P:extracellular matrix disassembly"/>
    <property type="evidence" value="ECO:0000315"/>
    <property type="project" value="HGNC-UCL"/>
</dbReference>
<dbReference type="GO" id="GO:0031581">
    <property type="term" value="P:hemidesmosome assembly"/>
    <property type="evidence" value="ECO:0000315"/>
    <property type="project" value="HGNC-UCL"/>
</dbReference>
<dbReference type="GO" id="GO:0035633">
    <property type="term" value="P:maintenance of blood-brain barrier"/>
    <property type="evidence" value="ECO:0000303"/>
    <property type="project" value="ARUK-UCL"/>
</dbReference>
<dbReference type="GO" id="GO:0045785">
    <property type="term" value="P:positive regulation of cell adhesion"/>
    <property type="evidence" value="ECO:0000303"/>
    <property type="project" value="ComplexPortal"/>
</dbReference>
<dbReference type="GO" id="GO:0050679">
    <property type="term" value="P:positive regulation of epithelial cell proliferation"/>
    <property type="evidence" value="ECO:0000304"/>
    <property type="project" value="HGNC-UCL"/>
</dbReference>
<dbReference type="GO" id="GO:2001046">
    <property type="term" value="P:positive regulation of integrin-mediated signaling pathway"/>
    <property type="evidence" value="ECO:0000303"/>
    <property type="project" value="ComplexPortal"/>
</dbReference>
<dbReference type="GO" id="GO:0051149">
    <property type="term" value="P:positive regulation of muscle cell differentiation"/>
    <property type="evidence" value="ECO:0000303"/>
    <property type="project" value="ComplexPortal"/>
</dbReference>
<dbReference type="GO" id="GO:0065003">
    <property type="term" value="P:protein-containing complex assembly"/>
    <property type="evidence" value="ECO:0000314"/>
    <property type="project" value="HGNC-UCL"/>
</dbReference>
<dbReference type="GO" id="GO:0110011">
    <property type="term" value="P:regulation of basement membrane organization"/>
    <property type="evidence" value="ECO:0000303"/>
    <property type="project" value="ComplexPortal"/>
</dbReference>
<dbReference type="GO" id="GO:0034446">
    <property type="term" value="P:substrate adhesion-dependent cell spreading"/>
    <property type="evidence" value="ECO:0000314"/>
    <property type="project" value="BHF-UCL"/>
</dbReference>
<dbReference type="CDD" id="cd00055">
    <property type="entry name" value="EGF_Lam"/>
    <property type="match status" value="10"/>
</dbReference>
<dbReference type="FunFam" id="2.10.25.10:FF:000067">
    <property type="entry name" value="Laminin subunit gamma 1"/>
    <property type="match status" value="2"/>
</dbReference>
<dbReference type="FunFam" id="2.10.25.10:FF:000193">
    <property type="entry name" value="Laminin subunit gamma 1"/>
    <property type="match status" value="1"/>
</dbReference>
<dbReference type="FunFam" id="2.10.25.10:FF:000415">
    <property type="entry name" value="Laminin subunit gamma 1"/>
    <property type="match status" value="1"/>
</dbReference>
<dbReference type="FunFam" id="2.60.120.260:FF:000018">
    <property type="entry name" value="Laminin subunit gamma 1"/>
    <property type="match status" value="1"/>
</dbReference>
<dbReference type="FunFam" id="2.10.25.10:FF:000174">
    <property type="entry name" value="Laminin subunit gamma-1"/>
    <property type="match status" value="1"/>
</dbReference>
<dbReference type="FunFam" id="2.10.25.10:FF:001192">
    <property type="entry name" value="Laminin subunit gamma-1"/>
    <property type="match status" value="1"/>
</dbReference>
<dbReference type="FunFam" id="2.10.25.10:FF:000105">
    <property type="entry name" value="laminin subunit gamma-1"/>
    <property type="match status" value="1"/>
</dbReference>
<dbReference type="FunFam" id="2.10.25.10:FF:000163">
    <property type="entry name" value="laminin subunit gamma-1"/>
    <property type="match status" value="1"/>
</dbReference>
<dbReference type="FunFam" id="2.10.25.10:FF:000166">
    <property type="entry name" value="laminin subunit gamma-1"/>
    <property type="match status" value="1"/>
</dbReference>
<dbReference type="Gene3D" id="2.60.120.260">
    <property type="entry name" value="Galactose-binding domain-like"/>
    <property type="match status" value="1"/>
</dbReference>
<dbReference type="Gene3D" id="2.10.25.10">
    <property type="entry name" value="Laminin"/>
    <property type="match status" value="9"/>
</dbReference>
<dbReference type="InterPro" id="IPR000742">
    <property type="entry name" value="EGF-like_dom"/>
</dbReference>
<dbReference type="InterPro" id="IPR050440">
    <property type="entry name" value="Laminin/Netrin_ECM"/>
</dbReference>
<dbReference type="InterPro" id="IPR000034">
    <property type="entry name" value="Laminin_IV"/>
</dbReference>
<dbReference type="InterPro" id="IPR008211">
    <property type="entry name" value="Laminin_N"/>
</dbReference>
<dbReference type="InterPro" id="IPR002049">
    <property type="entry name" value="LE_dom"/>
</dbReference>
<dbReference type="InterPro" id="IPR056863">
    <property type="entry name" value="LMN_ATRN_NET-like_EGF"/>
</dbReference>
<dbReference type="PANTHER" id="PTHR10574:SF270">
    <property type="entry name" value="LAMININ SUBUNIT GAMMA-1"/>
    <property type="match status" value="1"/>
</dbReference>
<dbReference type="PANTHER" id="PTHR10574">
    <property type="entry name" value="NETRIN/LAMININ-RELATED"/>
    <property type="match status" value="1"/>
</dbReference>
<dbReference type="Pfam" id="PF00053">
    <property type="entry name" value="EGF_laminin"/>
    <property type="match status" value="7"/>
</dbReference>
<dbReference type="Pfam" id="PF24973">
    <property type="entry name" value="EGF_LMN_ATRN"/>
    <property type="match status" value="3"/>
</dbReference>
<dbReference type="Pfam" id="PF00052">
    <property type="entry name" value="Laminin_B"/>
    <property type="match status" value="1"/>
</dbReference>
<dbReference type="Pfam" id="PF00055">
    <property type="entry name" value="Laminin_N"/>
    <property type="match status" value="1"/>
</dbReference>
<dbReference type="PRINTS" id="PR00011">
    <property type="entry name" value="EGFLAMININ"/>
</dbReference>
<dbReference type="SMART" id="SM00181">
    <property type="entry name" value="EGF"/>
    <property type="match status" value="8"/>
</dbReference>
<dbReference type="SMART" id="SM00180">
    <property type="entry name" value="EGF_Lam"/>
    <property type="match status" value="10"/>
</dbReference>
<dbReference type="SMART" id="SM00281">
    <property type="entry name" value="LamB"/>
    <property type="match status" value="1"/>
</dbReference>
<dbReference type="SMART" id="SM00136">
    <property type="entry name" value="LamNT"/>
    <property type="match status" value="1"/>
</dbReference>
<dbReference type="SUPFAM" id="SSF57196">
    <property type="entry name" value="EGF/Laminin"/>
    <property type="match status" value="10"/>
</dbReference>
<dbReference type="SUPFAM" id="SSF57997">
    <property type="entry name" value="Tropomyosin"/>
    <property type="match status" value="1"/>
</dbReference>
<dbReference type="PROSITE" id="PS00022">
    <property type="entry name" value="EGF_1"/>
    <property type="match status" value="8"/>
</dbReference>
<dbReference type="PROSITE" id="PS01186">
    <property type="entry name" value="EGF_2"/>
    <property type="match status" value="2"/>
</dbReference>
<dbReference type="PROSITE" id="PS01248">
    <property type="entry name" value="EGF_LAM_1"/>
    <property type="match status" value="11"/>
</dbReference>
<dbReference type="PROSITE" id="PS50027">
    <property type="entry name" value="EGF_LAM_2"/>
    <property type="match status" value="10"/>
</dbReference>
<dbReference type="PROSITE" id="PS51115">
    <property type="entry name" value="LAMININ_IVA"/>
    <property type="match status" value="1"/>
</dbReference>
<dbReference type="PROSITE" id="PS51117">
    <property type="entry name" value="LAMININ_NTER"/>
    <property type="match status" value="1"/>
</dbReference>